<evidence type="ECO:0000255" key="1">
    <source>
        <dbReference type="HAMAP-Rule" id="MF_01365"/>
    </source>
</evidence>
<evidence type="ECO:0000305" key="2"/>
<name>RL6_HELPS</name>
<feature type="chain" id="PRO_1000144000" description="Large ribosomal subunit protein uL6">
    <location>
        <begin position="1"/>
        <end position="178"/>
    </location>
</feature>
<keyword id="KW-0687">Ribonucleoprotein</keyword>
<keyword id="KW-0689">Ribosomal protein</keyword>
<keyword id="KW-0694">RNA-binding</keyword>
<keyword id="KW-0699">rRNA-binding</keyword>
<proteinExistence type="inferred from homology"/>
<accession>B2UV67</accession>
<organism>
    <name type="scientific">Helicobacter pylori (strain Shi470)</name>
    <dbReference type="NCBI Taxonomy" id="512562"/>
    <lineage>
        <taxon>Bacteria</taxon>
        <taxon>Pseudomonadati</taxon>
        <taxon>Campylobacterota</taxon>
        <taxon>Epsilonproteobacteria</taxon>
        <taxon>Campylobacterales</taxon>
        <taxon>Helicobacteraceae</taxon>
        <taxon>Helicobacter</taxon>
    </lineage>
</organism>
<dbReference type="EMBL" id="CP001072">
    <property type="protein sequence ID" value="ACD48749.1"/>
    <property type="molecule type" value="Genomic_DNA"/>
</dbReference>
<dbReference type="RefSeq" id="WP_000086592.1">
    <property type="nucleotide sequence ID" value="NC_010698.2"/>
</dbReference>
<dbReference type="SMR" id="B2UV67"/>
<dbReference type="KEGG" id="hps:HPSH_06745"/>
<dbReference type="HOGENOM" id="CLU_065464_1_2_7"/>
<dbReference type="GO" id="GO:0022625">
    <property type="term" value="C:cytosolic large ribosomal subunit"/>
    <property type="evidence" value="ECO:0007669"/>
    <property type="project" value="TreeGrafter"/>
</dbReference>
<dbReference type="GO" id="GO:0019843">
    <property type="term" value="F:rRNA binding"/>
    <property type="evidence" value="ECO:0007669"/>
    <property type="project" value="UniProtKB-UniRule"/>
</dbReference>
<dbReference type="GO" id="GO:0003735">
    <property type="term" value="F:structural constituent of ribosome"/>
    <property type="evidence" value="ECO:0007669"/>
    <property type="project" value="InterPro"/>
</dbReference>
<dbReference type="GO" id="GO:0002181">
    <property type="term" value="P:cytoplasmic translation"/>
    <property type="evidence" value="ECO:0007669"/>
    <property type="project" value="TreeGrafter"/>
</dbReference>
<dbReference type="FunFam" id="3.90.930.12:FF:000001">
    <property type="entry name" value="50S ribosomal protein L6"/>
    <property type="match status" value="1"/>
</dbReference>
<dbReference type="FunFam" id="3.90.930.12:FF:000010">
    <property type="entry name" value="50S ribosomal protein L6"/>
    <property type="match status" value="1"/>
</dbReference>
<dbReference type="Gene3D" id="3.90.930.12">
    <property type="entry name" value="Ribosomal protein L6, alpha-beta domain"/>
    <property type="match status" value="2"/>
</dbReference>
<dbReference type="HAMAP" id="MF_01365_B">
    <property type="entry name" value="Ribosomal_uL6_B"/>
    <property type="match status" value="1"/>
</dbReference>
<dbReference type="InterPro" id="IPR000702">
    <property type="entry name" value="Ribosomal_uL6-like"/>
</dbReference>
<dbReference type="InterPro" id="IPR036789">
    <property type="entry name" value="Ribosomal_uL6-like_a/b-dom_sf"/>
</dbReference>
<dbReference type="InterPro" id="IPR020040">
    <property type="entry name" value="Ribosomal_uL6_a/b-dom"/>
</dbReference>
<dbReference type="InterPro" id="IPR019906">
    <property type="entry name" value="Ribosomal_uL6_bac-type"/>
</dbReference>
<dbReference type="InterPro" id="IPR002358">
    <property type="entry name" value="Ribosomal_uL6_CS"/>
</dbReference>
<dbReference type="NCBIfam" id="TIGR03654">
    <property type="entry name" value="L6_bact"/>
    <property type="match status" value="1"/>
</dbReference>
<dbReference type="PANTHER" id="PTHR11655">
    <property type="entry name" value="60S/50S RIBOSOMAL PROTEIN L6/L9"/>
    <property type="match status" value="1"/>
</dbReference>
<dbReference type="PANTHER" id="PTHR11655:SF14">
    <property type="entry name" value="LARGE RIBOSOMAL SUBUNIT PROTEIN UL6M"/>
    <property type="match status" value="1"/>
</dbReference>
<dbReference type="Pfam" id="PF00347">
    <property type="entry name" value="Ribosomal_L6"/>
    <property type="match status" value="1"/>
</dbReference>
<dbReference type="PIRSF" id="PIRSF002162">
    <property type="entry name" value="Ribosomal_L6"/>
    <property type="match status" value="1"/>
</dbReference>
<dbReference type="PRINTS" id="PR00059">
    <property type="entry name" value="RIBOSOMALL6"/>
</dbReference>
<dbReference type="SUPFAM" id="SSF56053">
    <property type="entry name" value="Ribosomal protein L6"/>
    <property type="match status" value="2"/>
</dbReference>
<dbReference type="PROSITE" id="PS00525">
    <property type="entry name" value="RIBOSOMAL_L6_1"/>
    <property type="match status" value="1"/>
</dbReference>
<reference key="1">
    <citation type="submission" date="2008-05" db="EMBL/GenBank/DDBJ databases">
        <title>Genome sequence of Helicobacter pylori from the remote Amazon: traces of Asian ancestry of the first Americans.</title>
        <authorList>
            <person name="Kersulyte D."/>
            <person name="Kalia A."/>
            <person name="Gilman R.H."/>
            <person name="Berg D.E."/>
        </authorList>
    </citation>
    <scope>NUCLEOTIDE SEQUENCE [LARGE SCALE GENOMIC DNA]</scope>
    <source>
        <strain>Shi470</strain>
    </source>
</reference>
<gene>
    <name evidence="1" type="primary">rplF</name>
    <name type="ordered locus">HPSH_06745</name>
</gene>
<sequence>MSRIGKRIIEIPSSVQASVEGSKLLFKNSKEKHELETHNRVKITLENNQLSFQPVGEDAQSRAYWGTYGALANNIVIGLSTGFSKTLEVNGVGYKVALGNKTLDLSLGFSHPVKYPIPAGIEMVVEKNTITIKGSDKQKVGQVAAEIRSFRPPEPYKGKGVKYSDEVIIRKAGKTAKK</sequence>
<comment type="function">
    <text evidence="1">This protein binds to the 23S rRNA, and is important in its secondary structure. It is located near the subunit interface in the base of the L7/L12 stalk, and near the tRNA binding site of the peptidyltransferase center.</text>
</comment>
<comment type="subunit">
    <text evidence="1">Part of the 50S ribosomal subunit.</text>
</comment>
<comment type="similarity">
    <text evidence="1">Belongs to the universal ribosomal protein uL6 family.</text>
</comment>
<protein>
    <recommendedName>
        <fullName evidence="1">Large ribosomal subunit protein uL6</fullName>
    </recommendedName>
    <alternativeName>
        <fullName evidence="2">50S ribosomal protein L6</fullName>
    </alternativeName>
</protein>